<reference key="1">
    <citation type="submission" date="2007-06" db="EMBL/GenBank/DDBJ databases">
        <authorList>
            <person name="Brinkac L.M."/>
            <person name="Daugherty S."/>
            <person name="Dodson R.J."/>
            <person name="Madupu R."/>
            <person name="Brown J.L."/>
            <person name="Bruce D."/>
            <person name="Detter C."/>
            <person name="Munk C."/>
            <person name="Smith L.A."/>
            <person name="Smith T.J."/>
            <person name="White O."/>
            <person name="Brettin T.S."/>
        </authorList>
    </citation>
    <scope>NUCLEOTIDE SEQUENCE [LARGE SCALE GENOMIC DNA]</scope>
    <source>
        <strain>Langeland / NCTC 10281 / Type F</strain>
    </source>
</reference>
<protein>
    <recommendedName>
        <fullName evidence="1">UPF0102 protein CLI_2496</fullName>
    </recommendedName>
</protein>
<organism>
    <name type="scientific">Clostridium botulinum (strain Langeland / NCTC 10281 / Type F)</name>
    <dbReference type="NCBI Taxonomy" id="441772"/>
    <lineage>
        <taxon>Bacteria</taxon>
        <taxon>Bacillati</taxon>
        <taxon>Bacillota</taxon>
        <taxon>Clostridia</taxon>
        <taxon>Eubacteriales</taxon>
        <taxon>Clostridiaceae</taxon>
        <taxon>Clostridium</taxon>
    </lineage>
</organism>
<feature type="chain" id="PRO_1000009204" description="UPF0102 protein CLI_2496">
    <location>
        <begin position="1"/>
        <end position="123"/>
    </location>
</feature>
<comment type="similarity">
    <text evidence="1">Belongs to the UPF0102 family.</text>
</comment>
<accession>A7GG28</accession>
<sequence length="123" mass="14514">MHYCNKDIGSFGETIAVDYIKNCGYIILERNFRCKLGEIDIIAKDKNFIVFIEVKTRYSYIYGSPSEAITFRKQNKIYKTAQLYIIKKAIHNKFYFRFDVIEVILNTLNSNYSVKLIKNAFQI</sequence>
<name>Y2496_CLOBL</name>
<dbReference type="EMBL" id="CP000728">
    <property type="protein sequence ID" value="ABS41023.1"/>
    <property type="molecule type" value="Genomic_DNA"/>
</dbReference>
<dbReference type="RefSeq" id="WP_003384683.1">
    <property type="nucleotide sequence ID" value="NC_009699.1"/>
</dbReference>
<dbReference type="SMR" id="A7GG28"/>
<dbReference type="KEGG" id="cbf:CLI_2496"/>
<dbReference type="HOGENOM" id="CLU_115353_2_1_9"/>
<dbReference type="Proteomes" id="UP000002410">
    <property type="component" value="Chromosome"/>
</dbReference>
<dbReference type="GO" id="GO:0003676">
    <property type="term" value="F:nucleic acid binding"/>
    <property type="evidence" value="ECO:0007669"/>
    <property type="project" value="InterPro"/>
</dbReference>
<dbReference type="CDD" id="cd20736">
    <property type="entry name" value="PoNe_Nuclease"/>
    <property type="match status" value="1"/>
</dbReference>
<dbReference type="Gene3D" id="3.40.1350.10">
    <property type="match status" value="1"/>
</dbReference>
<dbReference type="HAMAP" id="MF_00048">
    <property type="entry name" value="UPF0102"/>
    <property type="match status" value="1"/>
</dbReference>
<dbReference type="InterPro" id="IPR011335">
    <property type="entry name" value="Restrct_endonuc-II-like"/>
</dbReference>
<dbReference type="InterPro" id="IPR011856">
    <property type="entry name" value="tRNA_endonuc-like_dom_sf"/>
</dbReference>
<dbReference type="InterPro" id="IPR003509">
    <property type="entry name" value="UPF0102_YraN-like"/>
</dbReference>
<dbReference type="NCBIfam" id="NF009150">
    <property type="entry name" value="PRK12497.1-3"/>
    <property type="match status" value="1"/>
</dbReference>
<dbReference type="NCBIfam" id="NF009154">
    <property type="entry name" value="PRK12497.3-3"/>
    <property type="match status" value="1"/>
</dbReference>
<dbReference type="NCBIfam" id="TIGR00252">
    <property type="entry name" value="YraN family protein"/>
    <property type="match status" value="1"/>
</dbReference>
<dbReference type="PANTHER" id="PTHR34039">
    <property type="entry name" value="UPF0102 PROTEIN YRAN"/>
    <property type="match status" value="1"/>
</dbReference>
<dbReference type="PANTHER" id="PTHR34039:SF1">
    <property type="entry name" value="UPF0102 PROTEIN YRAN"/>
    <property type="match status" value="1"/>
</dbReference>
<dbReference type="Pfam" id="PF02021">
    <property type="entry name" value="UPF0102"/>
    <property type="match status" value="1"/>
</dbReference>
<dbReference type="SUPFAM" id="SSF52980">
    <property type="entry name" value="Restriction endonuclease-like"/>
    <property type="match status" value="1"/>
</dbReference>
<evidence type="ECO:0000255" key="1">
    <source>
        <dbReference type="HAMAP-Rule" id="MF_00048"/>
    </source>
</evidence>
<proteinExistence type="inferred from homology"/>
<gene>
    <name type="ordered locus">CLI_2496</name>
</gene>